<protein>
    <recommendedName>
        <fullName>Uncharacterized protein C17C9.14</fullName>
    </recommendedName>
</protein>
<keyword id="KW-1185">Reference proteome</keyword>
<proteinExistence type="predicted"/>
<sequence>MSNPTIEGDENRKENTKSNTKPNFDDLDDLDDILDDLDVPSAFKNEEKKNIDEHKQTGNTSKENERIKNDDNLNSLIQEMMSKFEDLGGPSGLDGSQLSSSFQNDQLLNVILEDQFATEKDSDNGAVNYGALEAALNSLMSQVTSKEILYEPLKDLEANYPKFLKNAKETEKQGFEEQYQKIQKCIQIFESPEYDARKDADIISKLVEEIQEKPLPAPLIDNSMETAGCPTQ</sequence>
<dbReference type="EMBL" id="CU329670">
    <property type="protein sequence ID" value="CAA97344.1"/>
    <property type="molecule type" value="Genomic_DNA"/>
</dbReference>
<dbReference type="PIR" id="T11594">
    <property type="entry name" value="T11594"/>
</dbReference>
<dbReference type="SMR" id="Q10485"/>
<dbReference type="BioGRID" id="278661">
    <property type="interactions" value="17"/>
</dbReference>
<dbReference type="FunCoup" id="Q10485">
    <property type="interactions" value="12"/>
</dbReference>
<dbReference type="STRING" id="284812.Q10485"/>
<dbReference type="iPTMnet" id="Q10485"/>
<dbReference type="PaxDb" id="4896-SPAC17C9.14.1"/>
<dbReference type="EnsemblFungi" id="SPAC17C9.14.1">
    <property type="protein sequence ID" value="SPAC17C9.14.1:pep"/>
    <property type="gene ID" value="SPAC17C9.14"/>
</dbReference>
<dbReference type="KEGG" id="spo:2542186"/>
<dbReference type="PomBase" id="SPAC17C9.14"/>
<dbReference type="VEuPathDB" id="FungiDB:SPAC17C9.14"/>
<dbReference type="eggNOG" id="KOG3133">
    <property type="taxonomic scope" value="Eukaryota"/>
</dbReference>
<dbReference type="HOGENOM" id="CLU_1220304_0_0_1"/>
<dbReference type="InParanoid" id="Q10485"/>
<dbReference type="OMA" id="YQVQRDS"/>
<dbReference type="PhylomeDB" id="Q10485"/>
<dbReference type="Reactome" id="R-SPO-9603798">
    <property type="pathway name" value="Class I peroxisomal membrane protein import"/>
</dbReference>
<dbReference type="PRO" id="PR:Q10485"/>
<dbReference type="Proteomes" id="UP000002485">
    <property type="component" value="Chromosome I"/>
</dbReference>
<dbReference type="GO" id="GO:0005829">
    <property type="term" value="C:cytosol"/>
    <property type="evidence" value="ECO:0007005"/>
    <property type="project" value="PomBase"/>
</dbReference>
<dbReference type="GO" id="GO:0005778">
    <property type="term" value="C:peroxisomal membrane"/>
    <property type="evidence" value="ECO:0000318"/>
    <property type="project" value="GO_Central"/>
</dbReference>
<dbReference type="GO" id="GO:0033328">
    <property type="term" value="F:peroxisome membrane targeting sequence binding"/>
    <property type="evidence" value="ECO:0000318"/>
    <property type="project" value="GO_Central"/>
</dbReference>
<dbReference type="GO" id="GO:0045046">
    <property type="term" value="P:protein import into peroxisome membrane"/>
    <property type="evidence" value="ECO:0000318"/>
    <property type="project" value="GO_Central"/>
</dbReference>
<dbReference type="GO" id="GO:0006625">
    <property type="term" value="P:protein targeting to peroxisome"/>
    <property type="evidence" value="ECO:0000266"/>
    <property type="project" value="PomBase"/>
</dbReference>
<dbReference type="Gene3D" id="1.20.120.900">
    <property type="entry name" value="Pex19, mPTS binding domain"/>
    <property type="match status" value="1"/>
</dbReference>
<dbReference type="InterPro" id="IPR006708">
    <property type="entry name" value="Pex19"/>
</dbReference>
<dbReference type="InterPro" id="IPR038322">
    <property type="entry name" value="Pex19_C_sf"/>
</dbReference>
<dbReference type="PANTHER" id="PTHR12774">
    <property type="entry name" value="PEROXISOMAL BIOGENESIS FACTOR 19"/>
    <property type="match status" value="1"/>
</dbReference>
<dbReference type="PANTHER" id="PTHR12774:SF2">
    <property type="entry name" value="PEROXISOMAL BIOGENESIS FACTOR 19"/>
    <property type="match status" value="1"/>
</dbReference>
<dbReference type="Pfam" id="PF04614">
    <property type="entry name" value="Pex19"/>
    <property type="match status" value="1"/>
</dbReference>
<feature type="chain" id="PRO_0000116618" description="Uncharacterized protein C17C9.14">
    <location>
        <begin position="1"/>
        <end position="232"/>
    </location>
</feature>
<feature type="region of interest" description="Disordered" evidence="1">
    <location>
        <begin position="1"/>
        <end position="71"/>
    </location>
</feature>
<feature type="compositionally biased region" description="Acidic residues" evidence="1">
    <location>
        <begin position="25"/>
        <end position="38"/>
    </location>
</feature>
<feature type="compositionally biased region" description="Basic and acidic residues" evidence="1">
    <location>
        <begin position="44"/>
        <end position="71"/>
    </location>
</feature>
<gene>
    <name type="ORF">SPAC17C9.14</name>
</gene>
<reference key="1">
    <citation type="journal article" date="2002" name="Nature">
        <title>The genome sequence of Schizosaccharomyces pombe.</title>
        <authorList>
            <person name="Wood V."/>
            <person name="Gwilliam R."/>
            <person name="Rajandream M.A."/>
            <person name="Lyne M.H."/>
            <person name="Lyne R."/>
            <person name="Stewart A."/>
            <person name="Sgouros J.G."/>
            <person name="Peat N."/>
            <person name="Hayles J."/>
            <person name="Baker S.G."/>
            <person name="Basham D."/>
            <person name="Bowman S."/>
            <person name="Brooks K."/>
            <person name="Brown D."/>
            <person name="Brown S."/>
            <person name="Chillingworth T."/>
            <person name="Churcher C.M."/>
            <person name="Collins M."/>
            <person name="Connor R."/>
            <person name="Cronin A."/>
            <person name="Davis P."/>
            <person name="Feltwell T."/>
            <person name="Fraser A."/>
            <person name="Gentles S."/>
            <person name="Goble A."/>
            <person name="Hamlin N."/>
            <person name="Harris D.E."/>
            <person name="Hidalgo J."/>
            <person name="Hodgson G."/>
            <person name="Holroyd S."/>
            <person name="Hornsby T."/>
            <person name="Howarth S."/>
            <person name="Huckle E.J."/>
            <person name="Hunt S."/>
            <person name="Jagels K."/>
            <person name="James K.D."/>
            <person name="Jones L."/>
            <person name="Jones M."/>
            <person name="Leather S."/>
            <person name="McDonald S."/>
            <person name="McLean J."/>
            <person name="Mooney P."/>
            <person name="Moule S."/>
            <person name="Mungall K.L."/>
            <person name="Murphy L.D."/>
            <person name="Niblett D."/>
            <person name="Odell C."/>
            <person name="Oliver K."/>
            <person name="O'Neil S."/>
            <person name="Pearson D."/>
            <person name="Quail M.A."/>
            <person name="Rabbinowitsch E."/>
            <person name="Rutherford K.M."/>
            <person name="Rutter S."/>
            <person name="Saunders D."/>
            <person name="Seeger K."/>
            <person name="Sharp S."/>
            <person name="Skelton J."/>
            <person name="Simmonds M.N."/>
            <person name="Squares R."/>
            <person name="Squares S."/>
            <person name="Stevens K."/>
            <person name="Taylor K."/>
            <person name="Taylor R.G."/>
            <person name="Tivey A."/>
            <person name="Walsh S.V."/>
            <person name="Warren T."/>
            <person name="Whitehead S."/>
            <person name="Woodward J.R."/>
            <person name="Volckaert G."/>
            <person name="Aert R."/>
            <person name="Robben J."/>
            <person name="Grymonprez B."/>
            <person name="Weltjens I."/>
            <person name="Vanstreels E."/>
            <person name="Rieger M."/>
            <person name="Schaefer M."/>
            <person name="Mueller-Auer S."/>
            <person name="Gabel C."/>
            <person name="Fuchs M."/>
            <person name="Duesterhoeft A."/>
            <person name="Fritzc C."/>
            <person name="Holzer E."/>
            <person name="Moestl D."/>
            <person name="Hilbert H."/>
            <person name="Borzym K."/>
            <person name="Langer I."/>
            <person name="Beck A."/>
            <person name="Lehrach H."/>
            <person name="Reinhardt R."/>
            <person name="Pohl T.M."/>
            <person name="Eger P."/>
            <person name="Zimmermann W."/>
            <person name="Wedler H."/>
            <person name="Wambutt R."/>
            <person name="Purnelle B."/>
            <person name="Goffeau A."/>
            <person name="Cadieu E."/>
            <person name="Dreano S."/>
            <person name="Gloux S."/>
            <person name="Lelaure V."/>
            <person name="Mottier S."/>
            <person name="Galibert F."/>
            <person name="Aves S.J."/>
            <person name="Xiang Z."/>
            <person name="Hunt C."/>
            <person name="Moore K."/>
            <person name="Hurst S.M."/>
            <person name="Lucas M."/>
            <person name="Rochet M."/>
            <person name="Gaillardin C."/>
            <person name="Tallada V.A."/>
            <person name="Garzon A."/>
            <person name="Thode G."/>
            <person name="Daga R.R."/>
            <person name="Cruzado L."/>
            <person name="Jimenez J."/>
            <person name="Sanchez M."/>
            <person name="del Rey F."/>
            <person name="Benito J."/>
            <person name="Dominguez A."/>
            <person name="Revuelta J.L."/>
            <person name="Moreno S."/>
            <person name="Armstrong J."/>
            <person name="Forsburg S.L."/>
            <person name="Cerutti L."/>
            <person name="Lowe T."/>
            <person name="McCombie W.R."/>
            <person name="Paulsen I."/>
            <person name="Potashkin J."/>
            <person name="Shpakovski G.V."/>
            <person name="Ussery D."/>
            <person name="Barrell B.G."/>
            <person name="Nurse P."/>
        </authorList>
    </citation>
    <scope>NUCLEOTIDE SEQUENCE [LARGE SCALE GENOMIC DNA]</scope>
    <source>
        <strain>972 / ATCC 24843</strain>
    </source>
</reference>
<accession>Q10485</accession>
<evidence type="ECO:0000256" key="1">
    <source>
        <dbReference type="SAM" id="MobiDB-lite"/>
    </source>
</evidence>
<organism>
    <name type="scientific">Schizosaccharomyces pombe (strain 972 / ATCC 24843)</name>
    <name type="common">Fission yeast</name>
    <dbReference type="NCBI Taxonomy" id="284812"/>
    <lineage>
        <taxon>Eukaryota</taxon>
        <taxon>Fungi</taxon>
        <taxon>Dikarya</taxon>
        <taxon>Ascomycota</taxon>
        <taxon>Taphrinomycotina</taxon>
        <taxon>Schizosaccharomycetes</taxon>
        <taxon>Schizosaccharomycetales</taxon>
        <taxon>Schizosaccharomycetaceae</taxon>
        <taxon>Schizosaccharomyces</taxon>
    </lineage>
</organism>
<name>YDFE_SCHPO</name>